<keyword id="KW-0143">Chaperone</keyword>
<keyword id="KW-1185">Reference proteome</keyword>
<keyword id="KW-0346">Stress response</keyword>
<proteinExistence type="evidence at protein level"/>
<protein>
    <recommendedName>
        <fullName evidence="3">Adaptation to cold protein J</fullName>
    </recommendedName>
</protein>
<dbReference type="EMBL" id="AE014299">
    <property type="protein sequence ID" value="AAN54902.1"/>
    <property type="molecule type" value="Genomic_DNA"/>
</dbReference>
<dbReference type="RefSeq" id="NP_717458.1">
    <property type="nucleotide sequence ID" value="NC_004347.2"/>
</dbReference>
<dbReference type="RefSeq" id="WP_011071964.1">
    <property type="nucleotide sequence ID" value="NZ_CP053946.1"/>
</dbReference>
<dbReference type="SMR" id="Q8EFW5"/>
<dbReference type="STRING" id="211586.SO_1850"/>
<dbReference type="PaxDb" id="211586-SO_1850"/>
<dbReference type="KEGG" id="son:SO_1850"/>
<dbReference type="PATRIC" id="fig|211586.12.peg.1778"/>
<dbReference type="eggNOG" id="COG0484">
    <property type="taxonomic scope" value="Bacteria"/>
</dbReference>
<dbReference type="HOGENOM" id="CLU_017633_18_1_6"/>
<dbReference type="OrthoDB" id="9779889at2"/>
<dbReference type="PhylomeDB" id="Q8EFW5"/>
<dbReference type="BioCyc" id="SONE211586:G1GMP-1698-MONOMER"/>
<dbReference type="Proteomes" id="UP000008186">
    <property type="component" value="Chromosome"/>
</dbReference>
<dbReference type="CDD" id="cd06257">
    <property type="entry name" value="DnaJ"/>
    <property type="match status" value="1"/>
</dbReference>
<dbReference type="Gene3D" id="1.10.287.110">
    <property type="entry name" value="DnaJ domain"/>
    <property type="match status" value="1"/>
</dbReference>
<dbReference type="InterPro" id="IPR050817">
    <property type="entry name" value="DjlA_DnaK_co-chaperone"/>
</dbReference>
<dbReference type="InterPro" id="IPR001623">
    <property type="entry name" value="DnaJ_domain"/>
</dbReference>
<dbReference type="InterPro" id="IPR036869">
    <property type="entry name" value="J_dom_sf"/>
</dbReference>
<dbReference type="PANTHER" id="PTHR24074">
    <property type="entry name" value="CO-CHAPERONE PROTEIN DJLA"/>
    <property type="match status" value="1"/>
</dbReference>
<dbReference type="Pfam" id="PF00226">
    <property type="entry name" value="DnaJ"/>
    <property type="match status" value="1"/>
</dbReference>
<dbReference type="PRINTS" id="PR00625">
    <property type="entry name" value="JDOMAIN"/>
</dbReference>
<dbReference type="SMART" id="SM00271">
    <property type="entry name" value="DnaJ"/>
    <property type="match status" value="1"/>
</dbReference>
<dbReference type="SUPFAM" id="SSF46565">
    <property type="entry name" value="Chaperone J-domain"/>
    <property type="match status" value="1"/>
</dbReference>
<dbReference type="PROSITE" id="PS50076">
    <property type="entry name" value="DNAJ_2"/>
    <property type="match status" value="1"/>
</dbReference>
<sequence length="94" mass="10997">MINHFSVLGIKPSAKEDDIKKAYRRLSNKYHPDKLLGASDEEKEQASQQLERVKKAYEVLSDPKLRNAFIRDFNNVIVTDPNSAMRELWDQFYP</sequence>
<gene>
    <name evidence="3" type="primary">atcJ</name>
    <name evidence="5" type="ordered locus">SO_1850</name>
</gene>
<comment type="function">
    <text evidence="2">Involved in cold adaptation (PubMed:31482142). The J-domain is functional and can stimulate the ATPase activity of the DnaK chaperone (PubMed:31482142). May work as a co-chaperone of the DnaK system to support cold resistance (PubMed:31482142).</text>
</comment>
<comment type="subunit">
    <text evidence="2">Interacts via its C-terminal extension with AtcC (PubMed:31482142). Does not interact with AtcA and AtcB (PubMed:31482142).</text>
</comment>
<comment type="induction">
    <text evidence="2">Part of the atcJABC operon (PubMed:31482142). The operon is constitutively expressed, and expression shows only a very slight increase at low temperature (PubMed:31482142).</text>
</comment>
<comment type="domain">
    <text evidence="2">The J-domain is required for stimulation of DnaK activity (PubMed:31482142). The C-terminal extension of 21 amino acids is essential for AtcC binding and to support cold resistance (PubMed:31482142).</text>
</comment>
<comment type="disruption phenotype">
    <text evidence="2">Deletion of the gene leads to a dramatically reduced growth at low temperature.</text>
</comment>
<comment type="miscellaneous">
    <text evidence="2">Stimulation of the ATPase activity of DnaK is much higher with DnaJ than with AtcJ.</text>
</comment>
<feature type="chain" id="PRO_0000458837" description="Adaptation to cold protein J">
    <location>
        <begin position="1"/>
        <end position="94"/>
    </location>
</feature>
<feature type="domain" description="J" evidence="1">
    <location>
        <begin position="3"/>
        <end position="93"/>
    </location>
</feature>
<feature type="region of interest" description="Essential for interaction with AtcC" evidence="4">
    <location>
        <begin position="74"/>
        <end position="94"/>
    </location>
</feature>
<feature type="mutagenesis site" description="Almost no stimulation of the DnaK ATPase activity. Does not allow growth of the deletion mutant at low temperature." evidence="2">
    <original>H</original>
    <variation>Q</variation>
    <location>
        <position position="31"/>
    </location>
</feature>
<evidence type="ECO:0000255" key="1">
    <source>
        <dbReference type="PROSITE-ProRule" id="PRU00286"/>
    </source>
</evidence>
<evidence type="ECO:0000269" key="2">
    <source>
    </source>
</evidence>
<evidence type="ECO:0000303" key="3">
    <source>
    </source>
</evidence>
<evidence type="ECO:0000305" key="4">
    <source>
    </source>
</evidence>
<evidence type="ECO:0000312" key="5">
    <source>
        <dbReference type="EMBL" id="AAN54902.1"/>
    </source>
</evidence>
<accession>Q8EFW5</accession>
<reference key="1">
    <citation type="journal article" date="2002" name="Nat. Biotechnol.">
        <title>Genome sequence of the dissimilatory metal ion-reducing bacterium Shewanella oneidensis.</title>
        <authorList>
            <person name="Heidelberg J.F."/>
            <person name="Paulsen I.T."/>
            <person name="Nelson K.E."/>
            <person name="Gaidos E.J."/>
            <person name="Nelson W.C."/>
            <person name="Read T.D."/>
            <person name="Eisen J.A."/>
            <person name="Seshadri R."/>
            <person name="Ward N.L."/>
            <person name="Methe B.A."/>
            <person name="Clayton R.A."/>
            <person name="Meyer T."/>
            <person name="Tsapin A."/>
            <person name="Scott J."/>
            <person name="Beanan M.J."/>
            <person name="Brinkac L.M."/>
            <person name="Daugherty S.C."/>
            <person name="DeBoy R.T."/>
            <person name="Dodson R.J."/>
            <person name="Durkin A.S."/>
            <person name="Haft D.H."/>
            <person name="Kolonay J.F."/>
            <person name="Madupu R."/>
            <person name="Peterson J.D."/>
            <person name="Umayam L.A."/>
            <person name="White O."/>
            <person name="Wolf A.M."/>
            <person name="Vamathevan J.J."/>
            <person name="Weidman J.F."/>
            <person name="Impraim M."/>
            <person name="Lee K."/>
            <person name="Berry K.J."/>
            <person name="Lee C."/>
            <person name="Mueller J."/>
            <person name="Khouri H.M."/>
            <person name="Gill J."/>
            <person name="Utterback T.R."/>
            <person name="McDonald L.A."/>
            <person name="Feldblyum T.V."/>
            <person name="Smith H.O."/>
            <person name="Venter J.C."/>
            <person name="Nealson K.H."/>
            <person name="Fraser C.M."/>
        </authorList>
    </citation>
    <scope>NUCLEOTIDE SEQUENCE [LARGE SCALE GENOMIC DNA]</scope>
    <source>
        <strain>ATCC 700550 / JCM 31522 / CIP 106686 / LMG 19005 / NCIMB 14063 / MR-1</strain>
    </source>
</reference>
<reference key="2">
    <citation type="journal article" date="2019" name="Commun. Biol.">
        <title>Cold adaptation in the environmental bacterium Shewanella oneidensis is controlled by a J-domain co-chaperone protein network.</title>
        <authorList>
            <person name="Maillot N.J."/>
            <person name="Honore F.A."/>
            <person name="Byrne D."/>
            <person name="Mejean V."/>
            <person name="Genest O."/>
        </authorList>
    </citation>
    <scope>FUNCTION</scope>
    <scope>INTERACTION WITH ATCC</scope>
    <scope>INDUCTION</scope>
    <scope>DOMAIN</scope>
    <scope>DISRUPTION PHENOTYPE</scope>
    <scope>MUTAGENESIS OF HIS-31</scope>
    <source>
        <strain>MR1-R</strain>
    </source>
</reference>
<name>ATCJ_SHEON</name>
<organism>
    <name type="scientific">Shewanella oneidensis (strain ATCC 700550 / JCM 31522 / CIP 106686 / LMG 19005 / NCIMB 14063 / MR-1)</name>
    <dbReference type="NCBI Taxonomy" id="211586"/>
    <lineage>
        <taxon>Bacteria</taxon>
        <taxon>Pseudomonadati</taxon>
        <taxon>Pseudomonadota</taxon>
        <taxon>Gammaproteobacteria</taxon>
        <taxon>Alteromonadales</taxon>
        <taxon>Shewanellaceae</taxon>
        <taxon>Shewanella</taxon>
    </lineage>
</organism>